<proteinExistence type="evidence at protein level"/>
<evidence type="ECO:0000250" key="1">
    <source>
        <dbReference type="UniProtKB" id="P04798"/>
    </source>
</evidence>
<evidence type="ECO:0000255" key="2"/>
<evidence type="ECO:0000269" key="3">
    <source>
    </source>
</evidence>
<evidence type="ECO:0000303" key="4">
    <source>
    </source>
</evidence>
<evidence type="ECO:0000305" key="5"/>
<keyword id="KW-0349">Heme</keyword>
<keyword id="KW-0408">Iron</keyword>
<keyword id="KW-0472">Membrane</keyword>
<keyword id="KW-0479">Metal-binding</keyword>
<keyword id="KW-0503">Monooxygenase</keyword>
<keyword id="KW-0560">Oxidoreductase</keyword>
<keyword id="KW-0812">Transmembrane</keyword>
<keyword id="KW-1133">Transmembrane helix</keyword>
<sequence length="517" mass="59130">MHSLLVLFVSLLALGALKKHLDFRAAVDKIHNYPGLRFIFGVQSFIFGKRIPYFAAGGLSLWDTKHQDFVDHDADIISSVNIFPTCATYMIADAQAIKEITTNRARFPKPLQQYKILTFFGSNIVVTEADEWKRHRKISAPSFSERNNRLVWDETINIVKELSDDVWRGKNEVTMDNIVDLTVPIALFVIGVAGFGRRMSWVEDFTVPAGHSMPFKDALHLVSNHLWMKVLLPAWFLRSAPIPRVRKFHTAYEDLEKYMIEMIQARKTAEKKEERYDLFSSLLDANEEETDGNTKLSDSELMGNIFIYLIAGHETTAHTLAFTFILLALYQDEQEKLYQHIKSVVPDDRLPAYEEMGKLTYCYAMLLETLRMFPPVNLIPKQAAEDTTLHTSNMAGEPVAVPCLAGTALAIHTPGLHYNPRYWEDPFAFKPARFLGDWPRDAFLPFSAGPRSCLGRRFSETEAVAVLTYIVARWRIDVKEEPQFAGETFEQRKARLLDSKSAITLYPVRAPLVFKRR</sequence>
<name>CY124_POSPM</name>
<dbReference type="EC" id="1.-.-.-" evidence="3"/>
<dbReference type="EMBL" id="AB573323">
    <property type="protein sequence ID" value="BAK09456.1"/>
    <property type="molecule type" value="mRNA"/>
</dbReference>
<dbReference type="SMR" id="F1SYB2"/>
<dbReference type="GO" id="GO:0016020">
    <property type="term" value="C:membrane"/>
    <property type="evidence" value="ECO:0007669"/>
    <property type="project" value="UniProtKB-SubCell"/>
</dbReference>
<dbReference type="GO" id="GO:0020037">
    <property type="term" value="F:heme binding"/>
    <property type="evidence" value="ECO:0007669"/>
    <property type="project" value="InterPro"/>
</dbReference>
<dbReference type="GO" id="GO:0005506">
    <property type="term" value="F:iron ion binding"/>
    <property type="evidence" value="ECO:0007669"/>
    <property type="project" value="InterPro"/>
</dbReference>
<dbReference type="GO" id="GO:0004497">
    <property type="term" value="F:monooxygenase activity"/>
    <property type="evidence" value="ECO:0007669"/>
    <property type="project" value="UniProtKB-KW"/>
</dbReference>
<dbReference type="GO" id="GO:0016705">
    <property type="term" value="F:oxidoreductase activity, acting on paired donors, with incorporation or reduction of molecular oxygen"/>
    <property type="evidence" value="ECO:0007669"/>
    <property type="project" value="InterPro"/>
</dbReference>
<dbReference type="CDD" id="cd11070">
    <property type="entry name" value="CYP56-like"/>
    <property type="match status" value="1"/>
</dbReference>
<dbReference type="Gene3D" id="1.10.630.10">
    <property type="entry name" value="Cytochrome P450"/>
    <property type="match status" value="1"/>
</dbReference>
<dbReference type="InterPro" id="IPR001128">
    <property type="entry name" value="Cyt_P450"/>
</dbReference>
<dbReference type="InterPro" id="IPR017972">
    <property type="entry name" value="Cyt_P450_CS"/>
</dbReference>
<dbReference type="InterPro" id="IPR002401">
    <property type="entry name" value="Cyt_P450_E_grp-I"/>
</dbReference>
<dbReference type="InterPro" id="IPR036396">
    <property type="entry name" value="Cyt_P450_sf"/>
</dbReference>
<dbReference type="InterPro" id="IPR050121">
    <property type="entry name" value="Cytochrome_P450_monoxygenase"/>
</dbReference>
<dbReference type="PANTHER" id="PTHR24305">
    <property type="entry name" value="CYTOCHROME P450"/>
    <property type="match status" value="1"/>
</dbReference>
<dbReference type="PANTHER" id="PTHR24305:SF166">
    <property type="entry name" value="CYTOCHROME P450 12A4, MITOCHONDRIAL-RELATED"/>
    <property type="match status" value="1"/>
</dbReference>
<dbReference type="Pfam" id="PF00067">
    <property type="entry name" value="p450"/>
    <property type="match status" value="1"/>
</dbReference>
<dbReference type="PRINTS" id="PR00463">
    <property type="entry name" value="EP450I"/>
</dbReference>
<dbReference type="PRINTS" id="PR00385">
    <property type="entry name" value="P450"/>
</dbReference>
<dbReference type="SUPFAM" id="SSF48264">
    <property type="entry name" value="Cytochrome P450"/>
    <property type="match status" value="1"/>
</dbReference>
<dbReference type="PROSITE" id="PS00086">
    <property type="entry name" value="CYTOCHROME_P450"/>
    <property type="match status" value="1"/>
</dbReference>
<comment type="function">
    <text evidence="3">Cytochrome P450 monooxygenase that is able to use trans-stilbene as a substrate for oxidation.</text>
</comment>
<comment type="cofactor">
    <cofactor evidence="1">
        <name>heme</name>
        <dbReference type="ChEBI" id="CHEBI:30413"/>
    </cofactor>
</comment>
<comment type="pathway">
    <text evidence="5">Secondary metabolite biosynthesis.</text>
</comment>
<comment type="subcellular location">
    <subcellularLocation>
        <location evidence="2">Membrane</location>
        <topology evidence="2">Single-pass membrane protein</topology>
    </subcellularLocation>
</comment>
<comment type="similarity">
    <text evidence="5">Belongs to the cytochrome P450 family.</text>
</comment>
<organism>
    <name type="scientific">Postia placenta (strain ATCC 44394 / Madison 698-R)</name>
    <name type="common">Brown rot fungus</name>
    <name type="synonym">Poria monticola</name>
    <dbReference type="NCBI Taxonomy" id="561896"/>
    <lineage>
        <taxon>Eukaryota</taxon>
        <taxon>Fungi</taxon>
        <taxon>Dikarya</taxon>
        <taxon>Basidiomycota</taxon>
        <taxon>Agaricomycotina</taxon>
        <taxon>Agaricomycetes</taxon>
        <taxon>Polyporales</taxon>
        <taxon>Adustoporiaceae</taxon>
        <taxon>Rhodonia</taxon>
    </lineage>
</organism>
<feature type="chain" id="PRO_0000451396" description="Cytochrome P450 monooxygenase 124">
    <location>
        <begin position="1"/>
        <end position="517"/>
    </location>
</feature>
<feature type="transmembrane region" description="Helical" evidence="2">
    <location>
        <begin position="3"/>
        <end position="23"/>
    </location>
</feature>
<feature type="binding site" description="axial binding residue" evidence="1">
    <location>
        <position position="453"/>
    </location>
    <ligand>
        <name>heme</name>
        <dbReference type="ChEBI" id="CHEBI:30413"/>
    </ligand>
    <ligandPart>
        <name>Fe</name>
        <dbReference type="ChEBI" id="CHEBI:18248"/>
    </ligandPart>
</feature>
<reference key="1">
    <citation type="journal article" date="2012" name="Arch. Microbiol.">
        <title>Molecular identification and functional characterization of cytochrome P450 monooxygenases from the brown-rot basidiomycete Postia placenta.</title>
        <authorList>
            <person name="Ide M."/>
            <person name="Ichinose H."/>
            <person name="Wariishi H."/>
        </authorList>
    </citation>
    <scope>NUCLEOTIDE SEQUENCE [MRNA]</scope>
    <scope>IDENTIFICATION</scope>
    <scope>FUNCTION</scope>
    <scope>CATALYTIC ACTIVITY</scope>
    <source>
        <strain>ATCC 44394 / Madison 698-R</strain>
    </source>
</reference>
<protein>
    <recommendedName>
        <fullName evidence="4">Cytochrome P450 monooxygenase 124</fullName>
        <ecNumber evidence="3">1.-.-.-</ecNumber>
    </recommendedName>
</protein>
<accession>F1SYB2</accession>
<gene>
    <name evidence="4" type="primary">CYP124</name>
</gene>